<gene>
    <name evidence="1" type="primary">rplN</name>
    <name type="ordered locus">Franean1_6039</name>
</gene>
<proteinExistence type="inferred from homology"/>
<reference key="1">
    <citation type="journal article" date="2007" name="Genome Res.">
        <title>Genome characteristics of facultatively symbiotic Frankia sp. strains reflect host range and host plant biogeography.</title>
        <authorList>
            <person name="Normand P."/>
            <person name="Lapierre P."/>
            <person name="Tisa L.S."/>
            <person name="Gogarten J.P."/>
            <person name="Alloisio N."/>
            <person name="Bagnarol E."/>
            <person name="Bassi C.A."/>
            <person name="Berry A.M."/>
            <person name="Bickhart D.M."/>
            <person name="Choisne N."/>
            <person name="Couloux A."/>
            <person name="Cournoyer B."/>
            <person name="Cruveiller S."/>
            <person name="Daubin V."/>
            <person name="Demange N."/>
            <person name="Francino M.P."/>
            <person name="Goltsman E."/>
            <person name="Huang Y."/>
            <person name="Kopp O.R."/>
            <person name="Labarre L."/>
            <person name="Lapidus A."/>
            <person name="Lavire C."/>
            <person name="Marechal J."/>
            <person name="Martinez M."/>
            <person name="Mastronunzio J.E."/>
            <person name="Mullin B.C."/>
            <person name="Niemann J."/>
            <person name="Pujic P."/>
            <person name="Rawnsley T."/>
            <person name="Rouy Z."/>
            <person name="Schenowitz C."/>
            <person name="Sellstedt A."/>
            <person name="Tavares F."/>
            <person name="Tomkins J.P."/>
            <person name="Vallenet D."/>
            <person name="Valverde C."/>
            <person name="Wall L.G."/>
            <person name="Wang Y."/>
            <person name="Medigue C."/>
            <person name="Benson D.R."/>
        </authorList>
    </citation>
    <scope>NUCLEOTIDE SEQUENCE [LARGE SCALE GENOMIC DNA]</scope>
    <source>
        <strain>EAN1pec</strain>
    </source>
</reference>
<name>RL14_PARS2</name>
<protein>
    <recommendedName>
        <fullName evidence="1">Large ribosomal subunit protein uL14</fullName>
    </recommendedName>
    <alternativeName>
        <fullName evidence="2">50S ribosomal protein L14</fullName>
    </alternativeName>
</protein>
<sequence>MIQQESRLRVADNTGAREILCIRVLGGSGRRYAGIGDIIVGTVKDALPGAGVKRGDVVKAVVVRTKKERRRPDGSYIRFDENAAVLIRDGGDPRGTRIFGPVGRELRDKRFMKIISLAPEVL</sequence>
<organism>
    <name type="scientific">Parafrankia sp. (strain EAN1pec)</name>
    <dbReference type="NCBI Taxonomy" id="298653"/>
    <lineage>
        <taxon>Bacteria</taxon>
        <taxon>Bacillati</taxon>
        <taxon>Actinomycetota</taxon>
        <taxon>Actinomycetes</taxon>
        <taxon>Frankiales</taxon>
        <taxon>Frankiaceae</taxon>
        <taxon>Parafrankia</taxon>
    </lineage>
</organism>
<comment type="function">
    <text evidence="1">Binds to 23S rRNA. Forms part of two intersubunit bridges in the 70S ribosome.</text>
</comment>
<comment type="subunit">
    <text evidence="1">Part of the 50S ribosomal subunit. Forms a cluster with proteins L3 and L19. In the 70S ribosome, L14 and L19 interact and together make contacts with the 16S rRNA in bridges B5 and B8.</text>
</comment>
<comment type="similarity">
    <text evidence="1">Belongs to the universal ribosomal protein uL14 family.</text>
</comment>
<evidence type="ECO:0000255" key="1">
    <source>
        <dbReference type="HAMAP-Rule" id="MF_01367"/>
    </source>
</evidence>
<evidence type="ECO:0000305" key="2"/>
<feature type="chain" id="PRO_1000144275" description="Large ribosomal subunit protein uL14">
    <location>
        <begin position="1"/>
        <end position="122"/>
    </location>
</feature>
<accession>A8LC46</accession>
<keyword id="KW-0687">Ribonucleoprotein</keyword>
<keyword id="KW-0689">Ribosomal protein</keyword>
<keyword id="KW-0694">RNA-binding</keyword>
<keyword id="KW-0699">rRNA-binding</keyword>
<dbReference type="EMBL" id="CP000820">
    <property type="protein sequence ID" value="ABW15383.1"/>
    <property type="molecule type" value="Genomic_DNA"/>
</dbReference>
<dbReference type="RefSeq" id="WP_018505122.1">
    <property type="nucleotide sequence ID" value="NC_009921.1"/>
</dbReference>
<dbReference type="SMR" id="A8LC46"/>
<dbReference type="STRING" id="298653.Franean1_6039"/>
<dbReference type="KEGG" id="fre:Franean1_6039"/>
<dbReference type="eggNOG" id="COG0093">
    <property type="taxonomic scope" value="Bacteria"/>
</dbReference>
<dbReference type="HOGENOM" id="CLU_095071_2_1_11"/>
<dbReference type="GO" id="GO:0022625">
    <property type="term" value="C:cytosolic large ribosomal subunit"/>
    <property type="evidence" value="ECO:0007669"/>
    <property type="project" value="TreeGrafter"/>
</dbReference>
<dbReference type="GO" id="GO:0070180">
    <property type="term" value="F:large ribosomal subunit rRNA binding"/>
    <property type="evidence" value="ECO:0007669"/>
    <property type="project" value="TreeGrafter"/>
</dbReference>
<dbReference type="GO" id="GO:0003735">
    <property type="term" value="F:structural constituent of ribosome"/>
    <property type="evidence" value="ECO:0007669"/>
    <property type="project" value="InterPro"/>
</dbReference>
<dbReference type="GO" id="GO:0006412">
    <property type="term" value="P:translation"/>
    <property type="evidence" value="ECO:0007669"/>
    <property type="project" value="UniProtKB-UniRule"/>
</dbReference>
<dbReference type="CDD" id="cd00337">
    <property type="entry name" value="Ribosomal_uL14"/>
    <property type="match status" value="1"/>
</dbReference>
<dbReference type="FunFam" id="2.40.150.20:FF:000001">
    <property type="entry name" value="50S ribosomal protein L14"/>
    <property type="match status" value="1"/>
</dbReference>
<dbReference type="Gene3D" id="2.40.150.20">
    <property type="entry name" value="Ribosomal protein L14"/>
    <property type="match status" value="1"/>
</dbReference>
<dbReference type="HAMAP" id="MF_01367">
    <property type="entry name" value="Ribosomal_uL14"/>
    <property type="match status" value="1"/>
</dbReference>
<dbReference type="InterPro" id="IPR000218">
    <property type="entry name" value="Ribosomal_uL14"/>
</dbReference>
<dbReference type="InterPro" id="IPR005745">
    <property type="entry name" value="Ribosomal_uL14_bac-type"/>
</dbReference>
<dbReference type="InterPro" id="IPR019972">
    <property type="entry name" value="Ribosomal_uL14_CS"/>
</dbReference>
<dbReference type="InterPro" id="IPR036853">
    <property type="entry name" value="Ribosomal_uL14_sf"/>
</dbReference>
<dbReference type="NCBIfam" id="TIGR01067">
    <property type="entry name" value="rplN_bact"/>
    <property type="match status" value="1"/>
</dbReference>
<dbReference type="PANTHER" id="PTHR11761">
    <property type="entry name" value="50S/60S RIBOSOMAL PROTEIN L14/L23"/>
    <property type="match status" value="1"/>
</dbReference>
<dbReference type="PANTHER" id="PTHR11761:SF3">
    <property type="entry name" value="LARGE RIBOSOMAL SUBUNIT PROTEIN UL14M"/>
    <property type="match status" value="1"/>
</dbReference>
<dbReference type="Pfam" id="PF00238">
    <property type="entry name" value="Ribosomal_L14"/>
    <property type="match status" value="1"/>
</dbReference>
<dbReference type="SMART" id="SM01374">
    <property type="entry name" value="Ribosomal_L14"/>
    <property type="match status" value="1"/>
</dbReference>
<dbReference type="SUPFAM" id="SSF50193">
    <property type="entry name" value="Ribosomal protein L14"/>
    <property type="match status" value="1"/>
</dbReference>
<dbReference type="PROSITE" id="PS00049">
    <property type="entry name" value="RIBOSOMAL_L14"/>
    <property type="match status" value="1"/>
</dbReference>